<feature type="chain" id="PRO_0000200113" description="Homeobox protein Hox-B1">
    <location>
        <begin position="1" status="less than"/>
        <end position="184"/>
    </location>
</feature>
<feature type="DNA-binding region" description="Homeobox" evidence="2">
    <location>
        <begin position="87"/>
        <end position="146"/>
    </location>
</feature>
<feature type="region of interest" description="Disordered" evidence="3">
    <location>
        <begin position="140"/>
        <end position="184"/>
    </location>
</feature>
<feature type="compositionally biased region" description="Low complexity" evidence="3">
    <location>
        <begin position="166"/>
        <end position="184"/>
    </location>
</feature>
<feature type="non-terminal residue">
    <location>
        <position position="1"/>
    </location>
</feature>
<protein>
    <recommendedName>
        <fullName>Homeobox protein Hox-B1</fullName>
    </recommendedName>
    <alternativeName>
        <fullName>AHox1</fullName>
    </alternativeName>
</protein>
<keyword id="KW-0217">Developmental protein</keyword>
<keyword id="KW-0238">DNA-binding</keyword>
<keyword id="KW-0371">Homeobox</keyword>
<keyword id="KW-0539">Nucleus</keyword>
<keyword id="KW-0804">Transcription</keyword>
<keyword id="KW-0805">Transcription regulation</keyword>
<accession>P31357</accession>
<sequence length="184" mass="20012">GTPTTACSLPGGGGGWLWGGTCVQAMGRGGHRPSDGHLSPSPCCAFFSRCLCCFFGLYALSTSLALISSLFSLLTAKLSEYGLGSQQNSIRTNFTTKQLSELEKEFHFNKYLTRARRVEIAATLELNETQVKIWFQNRRMKQKKREKEGLAPSNGPQGRAREASEASDQSSSPSPYASPDSFSS</sequence>
<proteinExistence type="inferred from homology"/>
<evidence type="ECO:0000250" key="1"/>
<evidence type="ECO:0000255" key="2">
    <source>
        <dbReference type="PROSITE-ProRule" id="PRU00108"/>
    </source>
</evidence>
<evidence type="ECO:0000256" key="3">
    <source>
        <dbReference type="SAM" id="MobiDB-lite"/>
    </source>
</evidence>
<evidence type="ECO:0000305" key="4"/>
<dbReference type="EMBL" id="X15575">
    <property type="protein sequence ID" value="CAA33599.1"/>
    <property type="molecule type" value="Genomic_DNA"/>
</dbReference>
<dbReference type="PIR" id="A37041">
    <property type="entry name" value="A37041"/>
</dbReference>
<dbReference type="SMR" id="P31357"/>
<dbReference type="GO" id="GO:0005634">
    <property type="term" value="C:nucleus"/>
    <property type="evidence" value="ECO:0007669"/>
    <property type="project" value="UniProtKB-SubCell"/>
</dbReference>
<dbReference type="GO" id="GO:0000981">
    <property type="term" value="F:DNA-binding transcription factor activity, RNA polymerase II-specific"/>
    <property type="evidence" value="ECO:0007669"/>
    <property type="project" value="InterPro"/>
</dbReference>
<dbReference type="GO" id="GO:0000978">
    <property type="term" value="F:RNA polymerase II cis-regulatory region sequence-specific DNA binding"/>
    <property type="evidence" value="ECO:0007669"/>
    <property type="project" value="TreeGrafter"/>
</dbReference>
<dbReference type="CDD" id="cd00086">
    <property type="entry name" value="homeodomain"/>
    <property type="match status" value="1"/>
</dbReference>
<dbReference type="FunFam" id="1.10.10.60:FF:000113">
    <property type="entry name" value="homeobox protein Hox-B1"/>
    <property type="match status" value="1"/>
</dbReference>
<dbReference type="Gene3D" id="1.10.10.60">
    <property type="entry name" value="Homeodomain-like"/>
    <property type="match status" value="1"/>
</dbReference>
<dbReference type="InterPro" id="IPR001356">
    <property type="entry name" value="HD"/>
</dbReference>
<dbReference type="InterPro" id="IPR020479">
    <property type="entry name" value="HD_metazoa"/>
</dbReference>
<dbReference type="InterPro" id="IPR017970">
    <property type="entry name" value="Homeobox_CS"/>
</dbReference>
<dbReference type="InterPro" id="IPR009057">
    <property type="entry name" value="Homeodomain-like_sf"/>
</dbReference>
<dbReference type="InterPro" id="IPR046327">
    <property type="entry name" value="HXA1/B1/D1"/>
</dbReference>
<dbReference type="PANTHER" id="PTHR45946:SF5">
    <property type="entry name" value="HOMEOBOX PROTEIN HOX-B1"/>
    <property type="match status" value="1"/>
</dbReference>
<dbReference type="PANTHER" id="PTHR45946">
    <property type="entry name" value="HOMEOBOX PROTEIN ROUGH-RELATED"/>
    <property type="match status" value="1"/>
</dbReference>
<dbReference type="Pfam" id="PF00046">
    <property type="entry name" value="Homeodomain"/>
    <property type="match status" value="1"/>
</dbReference>
<dbReference type="PRINTS" id="PR00024">
    <property type="entry name" value="HOMEOBOX"/>
</dbReference>
<dbReference type="SMART" id="SM00389">
    <property type="entry name" value="HOX"/>
    <property type="match status" value="1"/>
</dbReference>
<dbReference type="SUPFAM" id="SSF46689">
    <property type="entry name" value="Homeodomain-like"/>
    <property type="match status" value="1"/>
</dbReference>
<dbReference type="PROSITE" id="PS00027">
    <property type="entry name" value="HOMEOBOX_1"/>
    <property type="match status" value="1"/>
</dbReference>
<dbReference type="PROSITE" id="PS50071">
    <property type="entry name" value="HOMEOBOX_2"/>
    <property type="match status" value="1"/>
</dbReference>
<organism>
    <name type="scientific">Ambystoma mexicanum</name>
    <name type="common">Axolotl</name>
    <dbReference type="NCBI Taxonomy" id="8296"/>
    <lineage>
        <taxon>Eukaryota</taxon>
        <taxon>Metazoa</taxon>
        <taxon>Chordata</taxon>
        <taxon>Craniata</taxon>
        <taxon>Vertebrata</taxon>
        <taxon>Euteleostomi</taxon>
        <taxon>Amphibia</taxon>
        <taxon>Batrachia</taxon>
        <taxon>Caudata</taxon>
        <taxon>Salamandroidea</taxon>
        <taxon>Ambystomatidae</taxon>
        <taxon>Ambystoma</taxon>
    </lineage>
</organism>
<name>HXB1_AMBME</name>
<reference key="1">
    <citation type="journal article" date="1990" name="Biochem. Cell Biol.">
        <title>Isolation and characterization of a developmentally regulated homeobox sequence in the Mexican axolotl Ambystoma mexicanum.</title>
        <authorList>
            <person name="Whiteley M.H."/>
            <person name="Armstrong J.B."/>
        </authorList>
    </citation>
    <scope>NUCLEOTIDE SEQUENCE [GENOMIC DNA]</scope>
</reference>
<comment type="function">
    <text evidence="1">Sequence-specific transcription factor which is part of a developmental regulatory system that provides cells with specific positional identities on the anterior-posterior axis. Acts on the anterior body structures (By similarity).</text>
</comment>
<comment type="subcellular location">
    <subcellularLocation>
        <location>Nucleus</location>
    </subcellularLocation>
</comment>
<comment type="similarity">
    <text evidence="4">Belongs to the Antp homeobox family. Labial subfamily.</text>
</comment>